<name>TIMP2_CRILO</name>
<comment type="function">
    <text evidence="1">Complexes with metalloproteinases (such as collagenases) and irreversibly inactivates them by binding to their catalytic zinc cofactor.</text>
</comment>
<comment type="subunit">
    <text evidence="1">Interacts (via the C-terminal) with MMP2 (via the C-terminal PEX domain); the interaction inhibits the MMP2 activity.</text>
</comment>
<comment type="subcellular location">
    <subcellularLocation>
        <location>Secreted</location>
    </subcellularLocation>
</comment>
<comment type="PTM">
    <text evidence="1">The activity of TIMP2 is dependent on the presence of disulfide bonds.</text>
</comment>
<comment type="similarity">
    <text evidence="4">Belongs to the protease inhibitor I35 (TIMP) family.</text>
</comment>
<accession>Q60453</accession>
<protein>
    <recommendedName>
        <fullName>Metalloproteinase inhibitor 2</fullName>
    </recommendedName>
    <alternativeName>
        <fullName>Tissue inhibitor of metalloproteinases 2</fullName>
        <shortName>TIMP-2</shortName>
    </alternativeName>
</protein>
<feature type="signal peptide" evidence="1">
    <location>
        <begin position="1" status="less than"/>
        <end position="2"/>
    </location>
</feature>
<feature type="chain" id="PRO_0000034334" description="Metalloproteinase inhibitor 2">
    <location>
        <begin position="3"/>
        <end position="196"/>
    </location>
</feature>
<feature type="domain" description="NTR" evidence="3">
    <location>
        <begin position="3"/>
        <end position="128"/>
    </location>
</feature>
<feature type="region of interest" description="Involved in metalloproteinase-binding" evidence="2">
    <location>
        <begin position="3"/>
        <end position="6"/>
    </location>
</feature>
<feature type="region of interest" description="Involved in metalloproteinase-binding" evidence="2">
    <location>
        <begin position="71"/>
        <end position="72"/>
    </location>
</feature>
<feature type="binding site" evidence="2">
    <location>
        <position position="3"/>
    </location>
    <ligand>
        <name>Zn(2+)</name>
        <dbReference type="ChEBI" id="CHEBI:29105"/>
        <note>ligand shared with metalloproteinase partner</note>
    </ligand>
</feature>
<feature type="site" description="Involved in metalloproteinase-binding" evidence="2">
    <location>
        <position position="16"/>
    </location>
</feature>
<feature type="site" description="Involved in metalloproteinase-binding" evidence="2">
    <location>
        <position position="37"/>
    </location>
</feature>
<feature type="site" description="Involved in metalloproteinase-binding" evidence="2">
    <location>
        <position position="43"/>
    </location>
</feature>
<feature type="disulfide bond" evidence="3">
    <location>
        <begin position="3"/>
        <end position="74"/>
    </location>
</feature>
<feature type="disulfide bond" evidence="3">
    <location>
        <begin position="5"/>
        <end position="103"/>
    </location>
</feature>
<feature type="disulfide bond" evidence="3">
    <location>
        <begin position="15"/>
        <end position="128"/>
    </location>
</feature>
<feature type="disulfide bond" evidence="3">
    <location>
        <begin position="130"/>
        <end position="177"/>
    </location>
</feature>
<feature type="disulfide bond" evidence="3">
    <location>
        <begin position="135"/>
        <end position="140"/>
    </location>
</feature>
<feature type="disulfide bond" evidence="3">
    <location>
        <begin position="148"/>
        <end position="169"/>
    </location>
</feature>
<feature type="non-terminal residue">
    <location>
        <position position="1"/>
    </location>
</feature>
<keyword id="KW-1015">Disulfide bond</keyword>
<keyword id="KW-0479">Metal-binding</keyword>
<keyword id="KW-0481">Metalloenzyme inhibitor</keyword>
<keyword id="KW-0483">Metalloprotease inhibitor</keyword>
<keyword id="KW-0646">Protease inhibitor</keyword>
<keyword id="KW-0964">Secreted</keyword>
<keyword id="KW-0732">Signal</keyword>
<keyword id="KW-0862">Zinc</keyword>
<gene>
    <name type="primary">TIMP2</name>
</gene>
<proteinExistence type="evidence at transcript level"/>
<reference key="1">
    <citation type="submission" date="1993-11" db="EMBL/GenBank/DDBJ databases">
        <authorList>
            <person name="Suzuki Y."/>
        </authorList>
    </citation>
    <scope>NUCLEOTIDE SEQUENCE [MRNA]</scope>
    <source>
        <tissue>Ovary</tissue>
    </source>
</reference>
<sequence length="196" mass="21941">RACSCSPVHPQQAFCNADVVIRAKAVSEKEVDSGNDIYGNPIKRIQYEIKQIKMFKGPDKDIEFIYTAPSSAVCGVSLDVGGKKEYLIAGKAEGDGKMHITLCDFIVPWDTLSTTQKKSLNHRYQMGCECKITRCPMIPCYISSPDECLWMDWVTEKSINGHQAKFFACIKRSDGSCAWYRGAAPPKQEFLDIEDP</sequence>
<organism>
    <name type="scientific">Cricetulus longicaudatus</name>
    <name type="common">Long-tailed dwarf hamster</name>
    <dbReference type="NCBI Taxonomy" id="10030"/>
    <lineage>
        <taxon>Eukaryota</taxon>
        <taxon>Metazoa</taxon>
        <taxon>Chordata</taxon>
        <taxon>Craniata</taxon>
        <taxon>Vertebrata</taxon>
        <taxon>Euteleostomi</taxon>
        <taxon>Mammalia</taxon>
        <taxon>Eutheria</taxon>
        <taxon>Euarchontoglires</taxon>
        <taxon>Glires</taxon>
        <taxon>Rodentia</taxon>
        <taxon>Myomorpha</taxon>
        <taxon>Muroidea</taxon>
        <taxon>Cricetidae</taxon>
        <taxon>Cricetinae</taxon>
        <taxon>Cricetulus</taxon>
    </lineage>
</organism>
<dbReference type="EMBL" id="X75924">
    <property type="protein sequence ID" value="CAA53528.1"/>
    <property type="molecule type" value="mRNA"/>
</dbReference>
<dbReference type="PIR" id="S38624">
    <property type="entry name" value="S38624"/>
</dbReference>
<dbReference type="BMRB" id="Q60453"/>
<dbReference type="SMR" id="Q60453"/>
<dbReference type="BindingDB" id="Q60453"/>
<dbReference type="MEROPS" id="I35.002"/>
<dbReference type="GO" id="GO:0031012">
    <property type="term" value="C:extracellular matrix"/>
    <property type="evidence" value="ECO:0007669"/>
    <property type="project" value="TreeGrafter"/>
</dbReference>
<dbReference type="GO" id="GO:0005615">
    <property type="term" value="C:extracellular space"/>
    <property type="evidence" value="ECO:0007669"/>
    <property type="project" value="TreeGrafter"/>
</dbReference>
<dbReference type="GO" id="GO:0046872">
    <property type="term" value="F:metal ion binding"/>
    <property type="evidence" value="ECO:0007669"/>
    <property type="project" value="UniProtKB-KW"/>
</dbReference>
<dbReference type="GO" id="GO:0008191">
    <property type="term" value="F:metalloendopeptidase inhibitor activity"/>
    <property type="evidence" value="ECO:0007669"/>
    <property type="project" value="InterPro"/>
</dbReference>
<dbReference type="GO" id="GO:0002020">
    <property type="term" value="F:protease binding"/>
    <property type="evidence" value="ECO:0007669"/>
    <property type="project" value="TreeGrafter"/>
</dbReference>
<dbReference type="GO" id="GO:0051045">
    <property type="term" value="P:negative regulation of membrane protein ectodomain proteolysis"/>
    <property type="evidence" value="ECO:0007669"/>
    <property type="project" value="TreeGrafter"/>
</dbReference>
<dbReference type="GO" id="GO:0034097">
    <property type="term" value="P:response to cytokine"/>
    <property type="evidence" value="ECO:0007669"/>
    <property type="project" value="TreeGrafter"/>
</dbReference>
<dbReference type="GO" id="GO:0009725">
    <property type="term" value="P:response to hormone"/>
    <property type="evidence" value="ECO:0007669"/>
    <property type="project" value="TreeGrafter"/>
</dbReference>
<dbReference type="CDD" id="cd03585">
    <property type="entry name" value="NTR_TIMP"/>
    <property type="match status" value="1"/>
</dbReference>
<dbReference type="FunFam" id="2.40.50.120:FF:000007">
    <property type="entry name" value="Metalloproteinase inhibitor 2"/>
    <property type="match status" value="1"/>
</dbReference>
<dbReference type="FunFam" id="3.90.370.10:FF:000001">
    <property type="entry name" value="Metalloproteinase inhibitor 3"/>
    <property type="match status" value="1"/>
</dbReference>
<dbReference type="Gene3D" id="2.40.50.120">
    <property type="match status" value="1"/>
</dbReference>
<dbReference type="Gene3D" id="3.90.370.10">
    <property type="entry name" value="Tissue inhibitor of metalloproteinase-1. Chain B, domain 1"/>
    <property type="match status" value="1"/>
</dbReference>
<dbReference type="InterPro" id="IPR001134">
    <property type="entry name" value="Netrin_domain"/>
</dbReference>
<dbReference type="InterPro" id="IPR001820">
    <property type="entry name" value="TIMP"/>
</dbReference>
<dbReference type="InterPro" id="IPR008993">
    <property type="entry name" value="TIMP-like_OB-fold"/>
</dbReference>
<dbReference type="InterPro" id="IPR027465">
    <property type="entry name" value="TIMP_C"/>
</dbReference>
<dbReference type="InterPro" id="IPR030490">
    <property type="entry name" value="TIMP_CS"/>
</dbReference>
<dbReference type="PANTHER" id="PTHR11844">
    <property type="entry name" value="METALLOPROTEASE INHIBITOR"/>
    <property type="match status" value="1"/>
</dbReference>
<dbReference type="PANTHER" id="PTHR11844:SF24">
    <property type="entry name" value="METALLOPROTEINASE INHIBITOR 2"/>
    <property type="match status" value="1"/>
</dbReference>
<dbReference type="Pfam" id="PF00965">
    <property type="entry name" value="TIMP"/>
    <property type="match status" value="1"/>
</dbReference>
<dbReference type="SMART" id="SM00206">
    <property type="entry name" value="NTR"/>
    <property type="match status" value="1"/>
</dbReference>
<dbReference type="SUPFAM" id="SSF50242">
    <property type="entry name" value="TIMP-like"/>
    <property type="match status" value="1"/>
</dbReference>
<dbReference type="PROSITE" id="PS50189">
    <property type="entry name" value="NTR"/>
    <property type="match status" value="1"/>
</dbReference>
<dbReference type="PROSITE" id="PS00288">
    <property type="entry name" value="TIMP"/>
    <property type="match status" value="1"/>
</dbReference>
<evidence type="ECO:0000250" key="1"/>
<evidence type="ECO:0000250" key="2">
    <source>
        <dbReference type="UniProtKB" id="P16035"/>
    </source>
</evidence>
<evidence type="ECO:0000255" key="3">
    <source>
        <dbReference type="PROSITE-ProRule" id="PRU00295"/>
    </source>
</evidence>
<evidence type="ECO:0000305" key="4"/>